<comment type="function">
    <text evidence="1">Pasteurella leukotoxins are exotoxins that attack host leukocytes and especially polymorphonuclear cells, by causing cell rupture. The leukotoxin binds to the host LFA-1 integrin and induces a signaling cascade leading to many biological effects, including tyrosine phosphorylation of the CD18 tail, elevation of the intracellular Ca(2+) and lysis of the host cell (By similarity). This leukotoxin is a major contributor to the pathogenesis of lung injury in ovine pneumonic pasteurellosis. It also has week hemolytic activity.</text>
</comment>
<comment type="subcellular location">
    <subcellularLocation>
        <location evidence="1">Secreted</location>
    </subcellularLocation>
    <subcellularLocation>
        <location evidence="1">Host cell membrane</location>
        <topology evidence="1">Multi-pass membrane protein</topology>
    </subcellularLocation>
</comment>
<comment type="domain">
    <text evidence="1">The transmembrane domains are believed to be involved in pore formation in target cells.</text>
</comment>
<comment type="domain">
    <text evidence="1">The Gly-rich region is probably involved in calcium binding, which is required for target cell-binding and cytolytic activity.</text>
</comment>
<comment type="domain">
    <text evidence="1">The C-terminal domain contains an export signal that is recognized by the ABC transporter complex LktBD.</text>
</comment>
<comment type="PTM">
    <text evidence="1">Acylated by LktC. The toxin only becomes active when modified (By similarity).</text>
</comment>
<comment type="miscellaneous">
    <text>The lktCABD operon has a complex mosaic structure that has been derived by extensive inter- and intraspecies horizontal DNA transfer and intragenic recombination events.</text>
</comment>
<comment type="similarity">
    <text evidence="3">Belongs to the RTX prokaryotic toxin (TC 1.C.11) family.</text>
</comment>
<sequence>MGNKLTNISTNLKSSWLTAKSGLNRTGQSLAKAGQSLKTGAKKIILYIPKDYQYDTEKGNGLQDLVKAAEELGIEVQKEEGNDIAKAQTSLGTIQNVLGLTERGIVLSAPQLDKLLQKTKVGQAIGSAENLTKGFSNAKTVLSGIQSILGSVLAGMDLDEALQKNSNELTLAKAGLELTNSLIENIANSVKTLDAFGDQINQLGSKLQNVKGLSSLGDKLKGLSGFDKTSLGLDVVSGLLSGATAALVLADKNASTSRKVGAGFELANQVVGNITKAVSSYILAQRVAAGLSSTGPVAALIASTVSLAISPLAFAGIADKFNHAKSLESYAERFKKLGYDGDNLLAEYQRGTGTIDASVTAINTALAAIAGGVSAAAAGSVIASPIALLVSGITGVISTILQYSKQAMFEHVANKIHNKIVEWEKNNHGKNYFENGYDARYLANLQDNMKFLLNLNKELQAERVIAITQQQWDNNIGDLAGISRLGEKVLSGKAYVDAFEEGKHLKADKLVQLDSANGIIDVSNSGKAKTQHILFRTPLLTPGTEHRERVQTGKYEYITKLNINRVDSWKITDGAASSTFDLTNVVQRIGIELDNAGNVTKTKETKIVAKLGAGDDNVFVGSGTTEIDGGEGYDRVHYSRGNYGALTIDATKETEQGSYTVNRFVETGKALHEVTSTHTALVGNREEKIEYRHSNNQHHAGYYTKDTLKAVEEIIGTSHNDIFKGSKFNDAFNGGDGVDTIDGNDGNDRLFGGKGDDIIDGGNGDDFIDGGKGNDLLHGGKGDDIFVHRQGDGNDIITDSDGNDKLSFSDSNLKDLTFEKVKHNLVITNSRKEKVTIQDWFREADFAKEVRNYKATKDEKIEEIIGQNGERITSKQVDDLIAKGNGKITQDELSKVVDNYELLKHSKNVTNSLDKLISSASAFTSSNDSRNVLVAPTSMLDQSLSSLQFARAA</sequence>
<reference key="1">
    <citation type="journal article" date="2001" name="J. Bacteriol.">
        <title>Sequence diversity and molecular evolution of the leukotoxin (lktA) gene in bovine and ovine strains of Mannheimia (Pasteurella) haemolytica.</title>
        <authorList>
            <person name="Davies R.L."/>
            <person name="Whittam T.S."/>
            <person name="Selander R.K."/>
        </authorList>
    </citation>
    <scope>NUCLEOTIDE SEQUENCE [GENOMIC DNA]</scope>
    <source>
        <strain>Serotype A11 / PH240</strain>
        <strain>Serotype A11 / PH344</strain>
        <strain>Serotype A11 / PH498</strain>
        <strain>Serotype UG3 / PH290</strain>
        <strain>Serotype UG3 / PH496</strain>
        <strain>Serotype UG3 / PH574</strain>
    </source>
</reference>
<organism>
    <name type="scientific">Mannheimia glucosida</name>
    <dbReference type="NCBI Taxonomy" id="85401"/>
    <lineage>
        <taxon>Bacteria</taxon>
        <taxon>Pseudomonadati</taxon>
        <taxon>Pseudomonadota</taxon>
        <taxon>Gammaproteobacteria</taxon>
        <taxon>Pasteurellales</taxon>
        <taxon>Pasteurellaceae</taxon>
        <taxon>Mannheimia</taxon>
    </lineage>
</organism>
<protein>
    <recommendedName>
        <fullName>Leukotoxin</fullName>
        <shortName>Lkt</shortName>
    </recommendedName>
</protein>
<accession>Q9ETX2</accession>
<accession>Q9EV23</accession>
<accession>Q9EV24</accession>
<accession>Q9EV25</accession>
<accession>Q9EV26</accession>
<dbReference type="EMBL" id="AF314517">
    <property type="protein sequence ID" value="AAG40301.1"/>
    <property type="molecule type" value="Genomic_DNA"/>
</dbReference>
<dbReference type="EMBL" id="AF314518">
    <property type="protein sequence ID" value="AAG40302.1"/>
    <property type="molecule type" value="Genomic_DNA"/>
</dbReference>
<dbReference type="EMBL" id="AF314519">
    <property type="protein sequence ID" value="AAG40303.1"/>
    <property type="molecule type" value="Genomic_DNA"/>
</dbReference>
<dbReference type="EMBL" id="AF314520">
    <property type="protein sequence ID" value="AAG40304.1"/>
    <property type="molecule type" value="Genomic_DNA"/>
</dbReference>
<dbReference type="EMBL" id="AF314521">
    <property type="protein sequence ID" value="AAG40305.1"/>
    <property type="molecule type" value="Genomic_DNA"/>
</dbReference>
<dbReference type="EMBL" id="AF314522">
    <property type="protein sequence ID" value="AAG40306.1"/>
    <property type="molecule type" value="Genomic_DNA"/>
</dbReference>
<dbReference type="RefSeq" id="WP_409500751.1">
    <property type="nucleotide sequence ID" value="NZ_CP176502.1"/>
</dbReference>
<dbReference type="SMR" id="Q9ETX2"/>
<dbReference type="GO" id="GO:0005576">
    <property type="term" value="C:extracellular region"/>
    <property type="evidence" value="ECO:0007669"/>
    <property type="project" value="UniProtKB-SubCell"/>
</dbReference>
<dbReference type="GO" id="GO:0020002">
    <property type="term" value="C:host cell plasma membrane"/>
    <property type="evidence" value="ECO:0007669"/>
    <property type="project" value="UniProtKB-SubCell"/>
</dbReference>
<dbReference type="GO" id="GO:0016020">
    <property type="term" value="C:membrane"/>
    <property type="evidence" value="ECO:0007669"/>
    <property type="project" value="UniProtKB-KW"/>
</dbReference>
<dbReference type="GO" id="GO:0005509">
    <property type="term" value="F:calcium ion binding"/>
    <property type="evidence" value="ECO:0007669"/>
    <property type="project" value="InterPro"/>
</dbReference>
<dbReference type="GO" id="GO:0015267">
    <property type="term" value="F:channel activity"/>
    <property type="evidence" value="ECO:0007669"/>
    <property type="project" value="InterPro"/>
</dbReference>
<dbReference type="GO" id="GO:0090729">
    <property type="term" value="F:toxin activity"/>
    <property type="evidence" value="ECO:0007669"/>
    <property type="project" value="UniProtKB-KW"/>
</dbReference>
<dbReference type="GO" id="GO:0031640">
    <property type="term" value="P:killing of cells of another organism"/>
    <property type="evidence" value="ECO:0007669"/>
    <property type="project" value="UniProtKB-KW"/>
</dbReference>
<dbReference type="FunFam" id="2.150.10.10:FF:000002">
    <property type="entry name" value="Leukotoxin"/>
    <property type="match status" value="1"/>
</dbReference>
<dbReference type="Gene3D" id="2.150.10.10">
    <property type="entry name" value="Serralysin-like metalloprotease, C-terminal"/>
    <property type="match status" value="1"/>
</dbReference>
<dbReference type="InterPro" id="IPR018511">
    <property type="entry name" value="Hemolysin-typ_Ca-bd_CS"/>
</dbReference>
<dbReference type="InterPro" id="IPR001343">
    <property type="entry name" value="Hemolysn_Ca-bd"/>
</dbReference>
<dbReference type="InterPro" id="IPR013550">
    <property type="entry name" value="RTX_C"/>
</dbReference>
<dbReference type="InterPro" id="IPR018504">
    <property type="entry name" value="RTX_pore_form"/>
</dbReference>
<dbReference type="InterPro" id="IPR050557">
    <property type="entry name" value="RTX_toxin/Mannuronan_C5-epim"/>
</dbReference>
<dbReference type="InterPro" id="IPR003995">
    <property type="entry name" value="RTX_toxin_determinant-A"/>
</dbReference>
<dbReference type="InterPro" id="IPR011049">
    <property type="entry name" value="Serralysin-like_metalloprot_C"/>
</dbReference>
<dbReference type="NCBIfam" id="NF033943">
    <property type="entry name" value="RTX_toxin"/>
    <property type="match status" value="1"/>
</dbReference>
<dbReference type="PANTHER" id="PTHR38340">
    <property type="entry name" value="S-LAYER PROTEIN"/>
    <property type="match status" value="1"/>
</dbReference>
<dbReference type="PANTHER" id="PTHR38340:SF1">
    <property type="entry name" value="S-LAYER PROTEIN"/>
    <property type="match status" value="1"/>
</dbReference>
<dbReference type="Pfam" id="PF00353">
    <property type="entry name" value="HemolysinCabind"/>
    <property type="match status" value="3"/>
</dbReference>
<dbReference type="Pfam" id="PF02382">
    <property type="entry name" value="RTX"/>
    <property type="match status" value="1"/>
</dbReference>
<dbReference type="Pfam" id="PF08339">
    <property type="entry name" value="RTX_C"/>
    <property type="match status" value="1"/>
</dbReference>
<dbReference type="PRINTS" id="PR00313">
    <property type="entry name" value="CABNDNGRPT"/>
</dbReference>
<dbReference type="PRINTS" id="PR01488">
    <property type="entry name" value="RTXTOXINA"/>
</dbReference>
<dbReference type="SUPFAM" id="SSF51120">
    <property type="entry name" value="beta-Roll"/>
    <property type="match status" value="1"/>
</dbReference>
<dbReference type="PROSITE" id="PS00330">
    <property type="entry name" value="HEMOLYSIN_CALCIUM"/>
    <property type="match status" value="4"/>
</dbReference>
<proteinExistence type="inferred from homology"/>
<keyword id="KW-0106">Calcium</keyword>
<keyword id="KW-0204">Cytolysis</keyword>
<keyword id="KW-0354">Hemolysis</keyword>
<keyword id="KW-1032">Host cell membrane</keyword>
<keyword id="KW-1043">Host membrane</keyword>
<keyword id="KW-0449">Lipoprotein</keyword>
<keyword id="KW-0472">Membrane</keyword>
<keyword id="KW-0677">Repeat</keyword>
<keyword id="KW-0964">Secreted</keyword>
<keyword id="KW-0800">Toxin</keyword>
<keyword id="KW-0812">Transmembrane</keyword>
<keyword id="KW-1133">Transmembrane helix</keyword>
<keyword id="KW-0843">Virulence</keyword>
<name>LKTA_MANGL</name>
<feature type="chain" id="PRO_0000196218" description="Leukotoxin">
    <location>
        <begin position="1"/>
        <end position="953"/>
    </location>
</feature>
<feature type="transmembrane region" description="Helical" evidence="2">
    <location>
        <begin position="230"/>
        <end position="250"/>
    </location>
</feature>
<feature type="transmembrane region" description="Helical" evidence="2">
    <location>
        <begin position="297"/>
        <end position="317"/>
    </location>
</feature>
<feature type="transmembrane region" description="Helical" evidence="2">
    <location>
        <begin position="359"/>
        <end position="379"/>
    </location>
</feature>
<feature type="transmembrane region" description="Helical" evidence="2">
    <location>
        <begin position="381"/>
        <end position="401"/>
    </location>
</feature>
<feature type="repeat" description="Hemolysin-type calcium-binding 1">
    <location>
        <begin position="715"/>
        <end position="732"/>
    </location>
</feature>
<feature type="repeat" description="Hemolysin-type calcium-binding 2">
    <location>
        <begin position="733"/>
        <end position="750"/>
    </location>
</feature>
<feature type="repeat" description="Hemolysin-type calcium-binding 3">
    <location>
        <begin position="751"/>
        <end position="768"/>
    </location>
</feature>
<feature type="repeat" description="Hemolysin-type calcium-binding 4">
    <location>
        <begin position="769"/>
        <end position="786"/>
    </location>
</feature>
<feature type="repeat" description="Hemolysin-type calcium-binding 5">
    <location>
        <begin position="789"/>
        <end position="806"/>
    </location>
</feature>
<feature type="sequence variant" description="In strain: PH574.">
    <location>
        <begin position="30"/>
        <end position="36"/>
    </location>
</feature>
<feature type="sequence variant" description="In strain: PH496.">
    <original>G</original>
    <variation>S</variation>
    <location>
        <position position="126"/>
    </location>
</feature>
<feature type="sequence variant" description="In strain: PH290.">
    <original>V</original>
    <variation>I</variation>
    <location>
        <position position="550"/>
    </location>
</feature>
<feature type="sequence variant" description="In strain: PH240.">
    <original>Q</original>
    <variation>R</variation>
    <location>
        <position position="656"/>
    </location>
</feature>
<feature type="sequence variant" description="In strain: PH240.">
    <original>V</original>
    <variation>I</variation>
    <location>
        <position position="711"/>
    </location>
</feature>
<feature type="sequence variant" description="In strain: PH496.">
    <original>R</original>
    <variation>K</variation>
    <location>
        <position position="831"/>
    </location>
</feature>
<feature type="sequence variant" description="In strain: PH240.">
    <original>D</original>
    <variation>E</variation>
    <location>
        <position position="879"/>
    </location>
</feature>
<feature type="sequence variant" description="In strain: PH240.">
    <original>A</original>
    <variation>E</variation>
    <location>
        <position position="882"/>
    </location>
</feature>
<feature type="sequence variant" description="In strain: PH240.">
    <original>N</original>
    <variation>K</variation>
    <location>
        <position position="885"/>
    </location>
</feature>
<feature type="sequence variant" description="In strain: PH240.">
    <original>TQDELSK</original>
    <variation>DKSDLSQ</variation>
    <location>
        <begin position="889"/>
        <end position="895"/>
    </location>
</feature>
<gene>
    <name type="primary">lktA</name>
</gene>
<evidence type="ECO:0000250" key="1"/>
<evidence type="ECO:0000255" key="2"/>
<evidence type="ECO:0000305" key="3"/>